<name>SYE_STAAE</name>
<proteinExistence type="inferred from homology"/>
<protein>
    <recommendedName>
        <fullName evidence="1">Glutamate--tRNA ligase</fullName>
        <ecNumber evidence="1">6.1.1.17</ecNumber>
    </recommendedName>
    <alternativeName>
        <fullName evidence="1">Glutamyl-tRNA synthetase</fullName>
        <shortName evidence="1">GluRS</shortName>
    </alternativeName>
</protein>
<accession>A6QEI0</accession>
<dbReference type="EC" id="6.1.1.17" evidence="1"/>
<dbReference type="EMBL" id="AP009351">
    <property type="protein sequence ID" value="BAF66762.1"/>
    <property type="molecule type" value="Genomic_DNA"/>
</dbReference>
<dbReference type="RefSeq" id="WP_001283793.1">
    <property type="nucleotide sequence ID" value="NZ_JBBIAE010000002.1"/>
</dbReference>
<dbReference type="SMR" id="A6QEI0"/>
<dbReference type="KEGG" id="sae:NWMN_0490"/>
<dbReference type="HOGENOM" id="CLU_015768_6_1_9"/>
<dbReference type="Proteomes" id="UP000006386">
    <property type="component" value="Chromosome"/>
</dbReference>
<dbReference type="GO" id="GO:0005829">
    <property type="term" value="C:cytosol"/>
    <property type="evidence" value="ECO:0007669"/>
    <property type="project" value="TreeGrafter"/>
</dbReference>
<dbReference type="GO" id="GO:0005524">
    <property type="term" value="F:ATP binding"/>
    <property type="evidence" value="ECO:0007669"/>
    <property type="project" value="UniProtKB-UniRule"/>
</dbReference>
<dbReference type="GO" id="GO:0004818">
    <property type="term" value="F:glutamate-tRNA ligase activity"/>
    <property type="evidence" value="ECO:0007669"/>
    <property type="project" value="UniProtKB-UniRule"/>
</dbReference>
<dbReference type="GO" id="GO:0000049">
    <property type="term" value="F:tRNA binding"/>
    <property type="evidence" value="ECO:0007669"/>
    <property type="project" value="InterPro"/>
</dbReference>
<dbReference type="GO" id="GO:0008270">
    <property type="term" value="F:zinc ion binding"/>
    <property type="evidence" value="ECO:0007669"/>
    <property type="project" value="InterPro"/>
</dbReference>
<dbReference type="GO" id="GO:0006424">
    <property type="term" value="P:glutamyl-tRNA aminoacylation"/>
    <property type="evidence" value="ECO:0007669"/>
    <property type="project" value="UniProtKB-UniRule"/>
</dbReference>
<dbReference type="CDD" id="cd00808">
    <property type="entry name" value="GluRS_core"/>
    <property type="match status" value="1"/>
</dbReference>
<dbReference type="FunFam" id="1.10.10.350:FF:000002">
    <property type="entry name" value="Glutamate--tRNA ligase"/>
    <property type="match status" value="1"/>
</dbReference>
<dbReference type="FunFam" id="3.40.50.620:FF:000007">
    <property type="entry name" value="Glutamate--tRNA ligase"/>
    <property type="match status" value="1"/>
</dbReference>
<dbReference type="Gene3D" id="1.10.10.350">
    <property type="match status" value="1"/>
</dbReference>
<dbReference type="Gene3D" id="3.40.50.620">
    <property type="entry name" value="HUPs"/>
    <property type="match status" value="1"/>
</dbReference>
<dbReference type="HAMAP" id="MF_00022">
    <property type="entry name" value="Glu_tRNA_synth_type1"/>
    <property type="match status" value="1"/>
</dbReference>
<dbReference type="InterPro" id="IPR045462">
    <property type="entry name" value="aa-tRNA-synth_I_cd-bd"/>
</dbReference>
<dbReference type="InterPro" id="IPR020751">
    <property type="entry name" value="aa-tRNA-synth_I_codon-bd_sub2"/>
</dbReference>
<dbReference type="InterPro" id="IPR001412">
    <property type="entry name" value="aa-tRNA-synth_I_CS"/>
</dbReference>
<dbReference type="InterPro" id="IPR008925">
    <property type="entry name" value="aa_tRNA-synth_I_cd-bd_sf"/>
</dbReference>
<dbReference type="InterPro" id="IPR004527">
    <property type="entry name" value="Glu-tRNA-ligase_bac/mito"/>
</dbReference>
<dbReference type="InterPro" id="IPR000924">
    <property type="entry name" value="Glu/Gln-tRNA-synth"/>
</dbReference>
<dbReference type="InterPro" id="IPR020058">
    <property type="entry name" value="Glu/Gln-tRNA-synth_Ib_cat-dom"/>
</dbReference>
<dbReference type="InterPro" id="IPR049940">
    <property type="entry name" value="GluQ/Sye"/>
</dbReference>
<dbReference type="InterPro" id="IPR033910">
    <property type="entry name" value="GluRS_core"/>
</dbReference>
<dbReference type="InterPro" id="IPR014729">
    <property type="entry name" value="Rossmann-like_a/b/a_fold"/>
</dbReference>
<dbReference type="NCBIfam" id="TIGR00464">
    <property type="entry name" value="gltX_bact"/>
    <property type="match status" value="1"/>
</dbReference>
<dbReference type="PANTHER" id="PTHR43311">
    <property type="entry name" value="GLUTAMATE--TRNA LIGASE"/>
    <property type="match status" value="1"/>
</dbReference>
<dbReference type="PANTHER" id="PTHR43311:SF2">
    <property type="entry name" value="GLUTAMATE--TRNA LIGASE, MITOCHONDRIAL-RELATED"/>
    <property type="match status" value="1"/>
</dbReference>
<dbReference type="Pfam" id="PF19269">
    <property type="entry name" value="Anticodon_2"/>
    <property type="match status" value="1"/>
</dbReference>
<dbReference type="Pfam" id="PF00749">
    <property type="entry name" value="tRNA-synt_1c"/>
    <property type="match status" value="1"/>
</dbReference>
<dbReference type="PRINTS" id="PR00987">
    <property type="entry name" value="TRNASYNTHGLU"/>
</dbReference>
<dbReference type="SUPFAM" id="SSF48163">
    <property type="entry name" value="An anticodon-binding domain of class I aminoacyl-tRNA synthetases"/>
    <property type="match status" value="1"/>
</dbReference>
<dbReference type="SUPFAM" id="SSF52374">
    <property type="entry name" value="Nucleotidylyl transferase"/>
    <property type="match status" value="1"/>
</dbReference>
<dbReference type="PROSITE" id="PS00178">
    <property type="entry name" value="AA_TRNA_LIGASE_I"/>
    <property type="match status" value="1"/>
</dbReference>
<feature type="chain" id="PRO_1000071002" description="Glutamate--tRNA ligase">
    <location>
        <begin position="1"/>
        <end position="484"/>
    </location>
</feature>
<feature type="short sequence motif" description="'HIGH' region" evidence="1">
    <location>
        <begin position="11"/>
        <end position="21"/>
    </location>
</feature>
<feature type="short sequence motif" description="'KMSKS' region" evidence="1">
    <location>
        <begin position="252"/>
        <end position="256"/>
    </location>
</feature>
<feature type="binding site" evidence="1">
    <location>
        <position position="255"/>
    </location>
    <ligand>
        <name>ATP</name>
        <dbReference type="ChEBI" id="CHEBI:30616"/>
    </ligand>
</feature>
<reference key="1">
    <citation type="journal article" date="2008" name="J. Bacteriol.">
        <title>Genome sequence of Staphylococcus aureus strain Newman and comparative analysis of staphylococcal genomes: polymorphism and evolution of two major pathogenicity islands.</title>
        <authorList>
            <person name="Baba T."/>
            <person name="Bae T."/>
            <person name="Schneewind O."/>
            <person name="Takeuchi F."/>
            <person name="Hiramatsu K."/>
        </authorList>
    </citation>
    <scope>NUCLEOTIDE SEQUENCE [LARGE SCALE GENOMIC DNA]</scope>
    <source>
        <strain>Newman</strain>
    </source>
</reference>
<keyword id="KW-0030">Aminoacyl-tRNA synthetase</keyword>
<keyword id="KW-0067">ATP-binding</keyword>
<keyword id="KW-0963">Cytoplasm</keyword>
<keyword id="KW-0436">Ligase</keyword>
<keyword id="KW-0547">Nucleotide-binding</keyword>
<keyword id="KW-0648">Protein biosynthesis</keyword>
<evidence type="ECO:0000255" key="1">
    <source>
        <dbReference type="HAMAP-Rule" id="MF_00022"/>
    </source>
</evidence>
<organism>
    <name type="scientific">Staphylococcus aureus (strain Newman)</name>
    <dbReference type="NCBI Taxonomy" id="426430"/>
    <lineage>
        <taxon>Bacteria</taxon>
        <taxon>Bacillati</taxon>
        <taxon>Bacillota</taxon>
        <taxon>Bacilli</taxon>
        <taxon>Bacillales</taxon>
        <taxon>Staphylococcaceae</taxon>
        <taxon>Staphylococcus</taxon>
    </lineage>
</organism>
<sequence>MSDRIRVRYAPSPTGYLHIGNARTALFNYLYAKHYNGDFVIRIEDTDKKRNLEDGETSQFDNLKWLGLDWDESVDKDNGYGPYRQSERQHIYQPLIDQLLAEDKAYKCYMTEEELEAEREAQIARGEMPRYGGQHAHLTEEQRQQFEAEGRQPSIRFRVPQNQTYSFDDMVKGNISFDSNGIGDWVIVKKDGIPTYNFAVAIDDHYMQISDVIRGDDHISNTPKQIMIYEAFGWEPPRFGHMSLIVNEERKKLSKRDGQILQFIEQYRDLGYLPEALFNFIALLGWSPEGEEEIFSKEEFIKIFDEKRLSKSPAFFDKQKLAWVNNQYMKQKDTETVFQLALPHLIKANLIPEVPSEEDLSWGRKLIALYQKEMSYAGEIVPLSEMFFKEMPALGEEEQQVINGEQVPELMTHLFSKLEALEPFESAEIKKTIKEVQKETGIKGKQLFMPIRVAVTGQMHGPELPNTIEVLGKEKVLNRLKQYK</sequence>
<comment type="function">
    <text evidence="1">Catalyzes the attachment of glutamate to tRNA(Glu) in a two-step reaction: glutamate is first activated by ATP to form Glu-AMP and then transferred to the acceptor end of tRNA(Glu).</text>
</comment>
<comment type="catalytic activity">
    <reaction evidence="1">
        <text>tRNA(Glu) + L-glutamate + ATP = L-glutamyl-tRNA(Glu) + AMP + diphosphate</text>
        <dbReference type="Rhea" id="RHEA:23540"/>
        <dbReference type="Rhea" id="RHEA-COMP:9663"/>
        <dbReference type="Rhea" id="RHEA-COMP:9680"/>
        <dbReference type="ChEBI" id="CHEBI:29985"/>
        <dbReference type="ChEBI" id="CHEBI:30616"/>
        <dbReference type="ChEBI" id="CHEBI:33019"/>
        <dbReference type="ChEBI" id="CHEBI:78442"/>
        <dbReference type="ChEBI" id="CHEBI:78520"/>
        <dbReference type="ChEBI" id="CHEBI:456215"/>
        <dbReference type="EC" id="6.1.1.17"/>
    </reaction>
</comment>
<comment type="subunit">
    <text evidence="1">Monomer.</text>
</comment>
<comment type="subcellular location">
    <subcellularLocation>
        <location evidence="1">Cytoplasm</location>
    </subcellularLocation>
</comment>
<comment type="similarity">
    <text evidence="1">Belongs to the class-I aminoacyl-tRNA synthetase family. Glutamate--tRNA ligase type 1 subfamily.</text>
</comment>
<gene>
    <name evidence="1" type="primary">gltX</name>
    <name type="ordered locus">NWMN_0490</name>
</gene>